<proteinExistence type="evidence at protein level"/>
<organism>
    <name type="scientific">Limnodynastes salmini</name>
    <name type="common">Salmon-striped frog</name>
    <dbReference type="NCBI Taxonomy" id="39404"/>
    <lineage>
        <taxon>Eukaryota</taxon>
        <taxon>Metazoa</taxon>
        <taxon>Chordata</taxon>
        <taxon>Craniata</taxon>
        <taxon>Vertebrata</taxon>
        <taxon>Euteleostomi</taxon>
        <taxon>Amphibia</taxon>
        <taxon>Batrachia</taxon>
        <taxon>Anura</taxon>
        <taxon>Neobatrachia</taxon>
        <taxon>Myobatrachoidea</taxon>
        <taxon>Limnodynastidae</taxon>
        <taxon>Limnodynastes</taxon>
    </lineage>
</organism>
<name>DYS5_LIMSA</name>
<sequence>GLISNLGI</sequence>
<feature type="peptide" id="PRO_0000043788" description="Dynastin-5">
    <location>
        <begin position="1"/>
        <end position="8"/>
    </location>
</feature>
<reference key="1">
    <citation type="journal article" date="1993" name="Aust. J. Chem.">
        <title>Peptides from Australian frogs. The structure of the dynastins from Limnodynastes salmini and fletcherin from Limnodynastes fletcheri.</title>
        <authorList>
            <person name="Bradford A.M."/>
            <person name="Raftery M.J."/>
            <person name="Bowie J.H."/>
            <person name="Wallace J.C."/>
            <person name="Tyler M.J."/>
        </authorList>
    </citation>
    <scope>PROTEIN SEQUENCE</scope>
    <scope>MASS SPECTROMETRY</scope>
    <source>
        <tissue>Skin secretion</tissue>
    </source>
</reference>
<keyword id="KW-0903">Direct protein sequencing</keyword>
<keyword id="KW-0964">Secreted</keyword>
<comment type="subcellular location">
    <subcellularLocation>
        <location>Secreted</location>
    </subcellularLocation>
</comment>
<comment type="tissue specificity">
    <text>Expressed by the skin glands.</text>
</comment>
<comment type="mass spectrometry"/>
<accession>P82083</accession>
<evidence type="ECO:0000269" key="1">
    <source ref="1"/>
</evidence>
<dbReference type="GO" id="GO:0005576">
    <property type="term" value="C:extracellular region"/>
    <property type="evidence" value="ECO:0007669"/>
    <property type="project" value="UniProtKB-SubCell"/>
</dbReference>
<protein>
    <recommendedName>
        <fullName>Dynastin-5</fullName>
    </recommendedName>
</protein>